<organism>
    <name type="scientific">Vaccinia virus (strain L-IVP)</name>
    <name type="common">VACV</name>
    <dbReference type="NCBI Taxonomy" id="31531"/>
    <lineage>
        <taxon>Viruses</taxon>
        <taxon>Varidnaviria</taxon>
        <taxon>Bamfordvirae</taxon>
        <taxon>Nucleocytoviricota</taxon>
        <taxon>Pokkesviricetes</taxon>
        <taxon>Chitovirales</taxon>
        <taxon>Poxviridae</taxon>
        <taxon>Chordopoxvirinae</taxon>
        <taxon>Orthopoxvirus</taxon>
        <taxon>Vaccinia virus</taxon>
    </lineage>
</organism>
<feature type="chain" id="PRO_0000099474" description="Apoptosis regulator OPG045">
    <location>
        <begin position="1"/>
        <end position="206" status="greater than"/>
    </location>
</feature>
<feature type="sequence variant">
    <original>K</original>
    <variation>S</variation>
    <location>
        <position position="206"/>
    </location>
</feature>
<feature type="non-terminal residue">
    <location>
        <position position="206"/>
    </location>
</feature>
<organismHost>
    <name type="scientific">Homo sapiens</name>
    <name type="common">Human</name>
    <dbReference type="NCBI Taxonomy" id="9606"/>
</organismHost>
<keyword id="KW-1035">Host cytoplasm</keyword>
<keyword id="KW-1043">Host membrane</keyword>
<keyword id="KW-1045">Host mitochondrion</keyword>
<keyword id="KW-1047">Host mitochondrion outer membrane</keyword>
<keyword id="KW-0472">Membrane</keyword>
<comment type="function">
    <text evidence="2">Plays a role in evading host innate immune response by inhibiting host inflammasome activation. Interacts with and inhibits NLR-mediated interleukin-1 beta/IL1B production in infected cells. At the host mitochondria outer membrane, interacts with the BH3 domain of host BAK and prevents BAK from binding active BAX. In turn, host apoptosis is inhibited.</text>
</comment>
<comment type="subunit">
    <text evidence="1 2">Homodimer. Interacts with host pro-apoptotic protein BCL2L11 (via BH3 domain). Interacts with host NLRP1. Interacts with host BAK.</text>
</comment>
<comment type="interaction">
    <interactant intactId="EBI-7066119">
        <id>P68451</id>
    </interactant>
    <interactant intactId="EBI-526406">
        <id>O43521</id>
        <label>BCL2L11</label>
    </interactant>
    <organismsDiffer>true</organismsDiffer>
    <experiments>4</experiments>
</comment>
<comment type="subcellular location">
    <subcellularLocation>
        <location evidence="2">Host mitochondrion outer membrane</location>
    </subcellularLocation>
    <subcellularLocation>
        <location evidence="2">Host cytoplasm</location>
    </subcellularLocation>
</comment>
<comment type="induction">
    <text evidence="2">Expressed in the early phase of the viral replicative cycle.</text>
</comment>
<comment type="similarity">
    <text evidence="3">Belongs to the orthopoxvirus OPG045 family.</text>
</comment>
<proteinExistence type="evidence at protein level"/>
<dbReference type="EMBL" id="M57977">
    <property type="protein sequence ID" value="AAA48297.1"/>
    <property type="molecule type" value="Genomic_DNA"/>
</dbReference>
<dbReference type="SMR" id="P68451"/>
<dbReference type="IntAct" id="P68451">
    <property type="interactions" value="11"/>
</dbReference>
<dbReference type="MINT" id="P68451"/>
<dbReference type="MEROPS" id="I91.001"/>
<dbReference type="GO" id="GO:0044193">
    <property type="term" value="C:host cell mitochondrial outer membrane"/>
    <property type="evidence" value="ECO:0007669"/>
    <property type="project" value="UniProtKB-SubCell"/>
</dbReference>
<dbReference type="GO" id="GO:0016020">
    <property type="term" value="C:membrane"/>
    <property type="evidence" value="ECO:0007669"/>
    <property type="project" value="UniProtKB-KW"/>
</dbReference>
<dbReference type="GO" id="GO:0042981">
    <property type="term" value="P:regulation of apoptotic process"/>
    <property type="evidence" value="ECO:0007669"/>
    <property type="project" value="InterPro"/>
</dbReference>
<dbReference type="GO" id="GO:0033668">
    <property type="term" value="P:symbiont-mediated suppression of host apoptosis"/>
    <property type="evidence" value="ECO:0007669"/>
    <property type="project" value="InterPro"/>
</dbReference>
<dbReference type="FunFam" id="1.10.437.10:FF:000013">
    <property type="entry name" value="Protein F1"/>
    <property type="match status" value="1"/>
</dbReference>
<dbReference type="Gene3D" id="1.10.437.10">
    <property type="entry name" value="Blc2-like"/>
    <property type="match status" value="1"/>
</dbReference>
<dbReference type="InterPro" id="IPR036834">
    <property type="entry name" value="Bcl-2-like_sf"/>
</dbReference>
<dbReference type="InterPro" id="IPR011207">
    <property type="entry name" value="Orthopox_F1"/>
</dbReference>
<dbReference type="InterPro" id="IPR021119">
    <property type="entry name" value="Poxvirus_F1/C10"/>
</dbReference>
<dbReference type="Pfam" id="PF11099">
    <property type="entry name" value="M11L"/>
    <property type="match status" value="1"/>
</dbReference>
<dbReference type="PIRSF" id="PIRSF015971">
    <property type="entry name" value="VAC_F1L"/>
    <property type="match status" value="1"/>
</dbReference>
<accession>P68451</accession>
<accession>P21091</accession>
<gene>
    <name type="primary">OPG045</name>
    <name type="ORF">F1L</name>
</gene>
<protein>
    <recommendedName>
        <fullName>Apoptosis regulator OPG045</fullName>
    </recommendedName>
    <alternativeName>
        <fullName>Protein F1</fullName>
    </alternativeName>
</protein>
<name>PG045_VACCP</name>
<evidence type="ECO:0000250" key="1">
    <source>
        <dbReference type="UniProtKB" id="O57173"/>
    </source>
</evidence>
<evidence type="ECO:0000250" key="2">
    <source>
        <dbReference type="UniProtKB" id="P24356"/>
    </source>
</evidence>
<evidence type="ECO:0000305" key="3"/>
<sequence>MLSMFMCNNIVDYVDDIDNGIVQDIEDEASNNVDHDYVYPLPENMVYRFDKSTNILDYLSTERDHVMMAVRYYMSKQRLDDLYRQLPTKTRSYIDIINIYCDKVSNDYNRDMNIMYDMASTKSFTVYDINNEVNTILMDNKGLGVRLATISFITELGRRCMNPVKTIKMFTLLSHTICDDCFVDYITDISPPDNTIPNTSTREYLK</sequence>
<reference key="1">
    <citation type="journal article" date="1988" name="Biotekhnologiya">
        <title>Structural-functional organization of segment of vaccinia virus genome.</title>
        <authorList>
            <person name="Mikryukov N.N."/>
            <person name="Chizhikov V.E."/>
            <person name="Prikhod'Ko G.G."/>
            <person name="Urmmanov I.M."/>
            <person name="Serpinskii O.I."/>
            <person name="Blinov V.M."/>
            <person name="Nikulin A.E."/>
            <person name="Vasilenko S.K."/>
        </authorList>
    </citation>
    <scope>NUCLEOTIDE SEQUENCE [GENOMIC DNA]</scope>
</reference>